<organism>
    <name type="scientific">Mus musculus</name>
    <name type="common">Mouse</name>
    <dbReference type="NCBI Taxonomy" id="10090"/>
    <lineage>
        <taxon>Eukaryota</taxon>
        <taxon>Metazoa</taxon>
        <taxon>Chordata</taxon>
        <taxon>Craniata</taxon>
        <taxon>Vertebrata</taxon>
        <taxon>Euteleostomi</taxon>
        <taxon>Mammalia</taxon>
        <taxon>Eutheria</taxon>
        <taxon>Euarchontoglires</taxon>
        <taxon>Glires</taxon>
        <taxon>Rodentia</taxon>
        <taxon>Myomorpha</taxon>
        <taxon>Muroidea</taxon>
        <taxon>Muridae</taxon>
        <taxon>Murinae</taxon>
        <taxon>Mus</taxon>
        <taxon>Mus</taxon>
    </lineage>
</organism>
<name>CIB4_MOUSE</name>
<dbReference type="EMBL" id="BC118938">
    <property type="protein sequence ID" value="AAI18939.1"/>
    <property type="molecule type" value="mRNA"/>
</dbReference>
<dbReference type="EMBL" id="AK006670">
    <property type="protein sequence ID" value="BAB24697.1"/>
    <property type="molecule type" value="mRNA"/>
</dbReference>
<dbReference type="CCDS" id="CCDS51453.1"/>
<dbReference type="RefSeq" id="NP_082759.1">
    <property type="nucleotide sequence ID" value="NM_028483.2"/>
</dbReference>
<dbReference type="SMR" id="Q9D9N5"/>
<dbReference type="FunCoup" id="Q9D9N5">
    <property type="interactions" value="2"/>
</dbReference>
<dbReference type="STRING" id="10090.ENSMUSP00000066222"/>
<dbReference type="iPTMnet" id="Q9D9N5"/>
<dbReference type="PhosphoSitePlus" id="Q9D9N5"/>
<dbReference type="SwissPalm" id="Q9D9N5"/>
<dbReference type="PaxDb" id="10090-ENSMUSP00000066222"/>
<dbReference type="ProteomicsDB" id="283555"/>
<dbReference type="Antibodypedia" id="27982">
    <property type="antibodies" value="113 antibodies from 24 providers"/>
</dbReference>
<dbReference type="Ensembl" id="ENSMUST00000065486.3">
    <property type="protein sequence ID" value="ENSMUSP00000066222.3"/>
    <property type="gene ID" value="ENSMUSG00000053194.3"/>
</dbReference>
<dbReference type="GeneID" id="73259"/>
<dbReference type="KEGG" id="mmu:73259"/>
<dbReference type="UCSC" id="uc008wvo.1">
    <property type="organism name" value="mouse"/>
</dbReference>
<dbReference type="AGR" id="MGI:1920509"/>
<dbReference type="CTD" id="130106"/>
<dbReference type="MGI" id="MGI:1920509">
    <property type="gene designation" value="Cib4"/>
</dbReference>
<dbReference type="VEuPathDB" id="HostDB:ENSMUSG00000053194"/>
<dbReference type="eggNOG" id="KOG0034">
    <property type="taxonomic scope" value="Eukaryota"/>
</dbReference>
<dbReference type="GeneTree" id="ENSGT00940000161840"/>
<dbReference type="HOGENOM" id="CLU_061288_6_2_1"/>
<dbReference type="InParanoid" id="Q9D9N5"/>
<dbReference type="OMA" id="CKVFSHN"/>
<dbReference type="OrthoDB" id="114727at2759"/>
<dbReference type="PhylomeDB" id="Q9D9N5"/>
<dbReference type="TreeFam" id="TF313865"/>
<dbReference type="BioGRID-ORCS" id="73259">
    <property type="hits" value="4 hits in 79 CRISPR screens"/>
</dbReference>
<dbReference type="ChiTaRS" id="Cib4">
    <property type="organism name" value="mouse"/>
</dbReference>
<dbReference type="PRO" id="PR:Q9D9N5"/>
<dbReference type="Proteomes" id="UP000000589">
    <property type="component" value="Chromosome 5"/>
</dbReference>
<dbReference type="RNAct" id="Q9D9N5">
    <property type="molecule type" value="protein"/>
</dbReference>
<dbReference type="Bgee" id="ENSMUSG00000053194">
    <property type="expression patterns" value="Expressed in spermatid and 6 other cell types or tissues"/>
</dbReference>
<dbReference type="GO" id="GO:0005509">
    <property type="term" value="F:calcium ion binding"/>
    <property type="evidence" value="ECO:0000250"/>
    <property type="project" value="UniProtKB"/>
</dbReference>
<dbReference type="GO" id="GO:0000287">
    <property type="term" value="F:magnesium ion binding"/>
    <property type="evidence" value="ECO:0000250"/>
    <property type="project" value="UniProtKB"/>
</dbReference>
<dbReference type="CDD" id="cd00051">
    <property type="entry name" value="EFh"/>
    <property type="match status" value="1"/>
</dbReference>
<dbReference type="FunFam" id="1.10.238.10:FF:000035">
    <property type="entry name" value="Calcium and integrin-binding family member 2"/>
    <property type="match status" value="1"/>
</dbReference>
<dbReference type="Gene3D" id="1.10.238.10">
    <property type="entry name" value="EF-hand"/>
    <property type="match status" value="2"/>
</dbReference>
<dbReference type="InterPro" id="IPR051433">
    <property type="entry name" value="CIBP"/>
</dbReference>
<dbReference type="InterPro" id="IPR011992">
    <property type="entry name" value="EF-hand-dom_pair"/>
</dbReference>
<dbReference type="InterPro" id="IPR018247">
    <property type="entry name" value="EF_Hand_1_Ca_BS"/>
</dbReference>
<dbReference type="InterPro" id="IPR002048">
    <property type="entry name" value="EF_hand_dom"/>
</dbReference>
<dbReference type="PANTHER" id="PTHR45791">
    <property type="entry name" value="CALCIUM AND INTEGRIN BINDING FAMILY MEMBER 2"/>
    <property type="match status" value="1"/>
</dbReference>
<dbReference type="PANTHER" id="PTHR45791:SF4">
    <property type="entry name" value="CALCIUM AND INTEGRIN-BINDING FAMILY MEMBER 4"/>
    <property type="match status" value="1"/>
</dbReference>
<dbReference type="Pfam" id="PF13499">
    <property type="entry name" value="EF-hand_7"/>
    <property type="match status" value="1"/>
</dbReference>
<dbReference type="SMART" id="SM00054">
    <property type="entry name" value="EFh"/>
    <property type="match status" value="2"/>
</dbReference>
<dbReference type="SUPFAM" id="SSF47473">
    <property type="entry name" value="EF-hand"/>
    <property type="match status" value="1"/>
</dbReference>
<dbReference type="PROSITE" id="PS00018">
    <property type="entry name" value="EF_HAND_1"/>
    <property type="match status" value="1"/>
</dbReference>
<dbReference type="PROSITE" id="PS50222">
    <property type="entry name" value="EF_HAND_2"/>
    <property type="match status" value="2"/>
</dbReference>
<evidence type="ECO:0000250" key="1"/>
<evidence type="ECO:0000255" key="2">
    <source>
        <dbReference type="PROSITE-ProRule" id="PRU00448"/>
    </source>
</evidence>
<evidence type="ECO:0000269" key="3">
    <source>
    </source>
</evidence>
<evidence type="ECO:0000305" key="4"/>
<protein>
    <recommendedName>
        <fullName>Calcium and integrin-binding family member 4</fullName>
    </recommendedName>
</protein>
<proteinExistence type="evidence at transcript level"/>
<gene>
    <name type="primary">Cib4</name>
</gene>
<feature type="chain" id="PRO_0000289291" description="Calcium and integrin-binding family member 4">
    <location>
        <begin position="1"/>
        <end position="185"/>
    </location>
</feature>
<feature type="domain" description="EF-hand 1" evidence="4">
    <location>
        <begin position="62"/>
        <end position="95"/>
    </location>
</feature>
<feature type="domain" description="EF-hand 2" evidence="2">
    <location>
        <begin position="97"/>
        <end position="132"/>
    </location>
</feature>
<feature type="domain" description="EF-hand 3" evidence="2">
    <location>
        <begin position="138"/>
        <end position="174"/>
    </location>
</feature>
<feature type="binding site" evidence="2">
    <location>
        <position position="110"/>
    </location>
    <ligand>
        <name>Ca(2+)</name>
        <dbReference type="ChEBI" id="CHEBI:29108"/>
    </ligand>
</feature>
<feature type="binding site" evidence="2">
    <location>
        <position position="112"/>
    </location>
    <ligand>
        <name>Ca(2+)</name>
        <dbReference type="ChEBI" id="CHEBI:29108"/>
    </ligand>
</feature>
<feature type="binding site" evidence="2">
    <location>
        <position position="114"/>
    </location>
    <ligand>
        <name>Ca(2+)</name>
        <dbReference type="ChEBI" id="CHEBI:29108"/>
    </ligand>
</feature>
<feature type="binding site" evidence="2">
    <location>
        <position position="121"/>
    </location>
    <ligand>
        <name>Ca(2+)</name>
        <dbReference type="ChEBI" id="CHEBI:29108"/>
    </ligand>
</feature>
<accession>Q9D9N5</accession>
<sequence length="185" mass="21637">MGQCLRYQMQWEDLEEYQALTFLTRNEILCIHDTFLKLCPSGKHYKEATLTMDQVSSLPALRVNPFRDRICRVFSHDNVFSFEDVLGMASVFSEQACPSLKIEYAFRIYDFNENGFIDEEDLEEIVLRLLKSDDASEDLLMDVMHHVLSESDLDNDSMLSFSEFEHAMAKSPDFMNSFRIHFWGC</sequence>
<keyword id="KW-0106">Calcium</keyword>
<keyword id="KW-0460">Magnesium</keyword>
<keyword id="KW-0479">Metal-binding</keyword>
<keyword id="KW-1185">Reference proteome</keyword>
<keyword id="KW-0677">Repeat</keyword>
<comment type="subunit">
    <text evidence="1">Interacts with ITGA2B (via C-terminus cytoplasmic tail region); the interaction is stabilized/increased in a calcium- and magnesium-dependent manner.</text>
</comment>
<comment type="tissue specificity">
    <text evidence="3">Expressed weakly in megakaryocytes and endothelial cells.</text>
</comment>
<comment type="miscellaneous">
    <text evidence="1">The binding of either calcium or magnesium may significantly increases the structural stability of the protein in comparison to apo-CIB (calcium- and magnesium-free form).</text>
</comment>
<reference key="1">
    <citation type="journal article" date="2005" name="Science">
        <title>The transcriptional landscape of the mammalian genome.</title>
        <authorList>
            <person name="Carninci P."/>
            <person name="Kasukawa T."/>
            <person name="Katayama S."/>
            <person name="Gough J."/>
            <person name="Frith M.C."/>
            <person name="Maeda N."/>
            <person name="Oyama R."/>
            <person name="Ravasi T."/>
            <person name="Lenhard B."/>
            <person name="Wells C."/>
            <person name="Kodzius R."/>
            <person name="Shimokawa K."/>
            <person name="Bajic V.B."/>
            <person name="Brenner S.E."/>
            <person name="Batalov S."/>
            <person name="Forrest A.R."/>
            <person name="Zavolan M."/>
            <person name="Davis M.J."/>
            <person name="Wilming L.G."/>
            <person name="Aidinis V."/>
            <person name="Allen J.E."/>
            <person name="Ambesi-Impiombato A."/>
            <person name="Apweiler R."/>
            <person name="Aturaliya R.N."/>
            <person name="Bailey T.L."/>
            <person name="Bansal M."/>
            <person name="Baxter L."/>
            <person name="Beisel K.W."/>
            <person name="Bersano T."/>
            <person name="Bono H."/>
            <person name="Chalk A.M."/>
            <person name="Chiu K.P."/>
            <person name="Choudhary V."/>
            <person name="Christoffels A."/>
            <person name="Clutterbuck D.R."/>
            <person name="Crowe M.L."/>
            <person name="Dalla E."/>
            <person name="Dalrymple B.P."/>
            <person name="de Bono B."/>
            <person name="Della Gatta G."/>
            <person name="di Bernardo D."/>
            <person name="Down T."/>
            <person name="Engstrom P."/>
            <person name="Fagiolini M."/>
            <person name="Faulkner G."/>
            <person name="Fletcher C.F."/>
            <person name="Fukushima T."/>
            <person name="Furuno M."/>
            <person name="Futaki S."/>
            <person name="Gariboldi M."/>
            <person name="Georgii-Hemming P."/>
            <person name="Gingeras T.R."/>
            <person name="Gojobori T."/>
            <person name="Green R.E."/>
            <person name="Gustincich S."/>
            <person name="Harbers M."/>
            <person name="Hayashi Y."/>
            <person name="Hensch T.K."/>
            <person name="Hirokawa N."/>
            <person name="Hill D."/>
            <person name="Huminiecki L."/>
            <person name="Iacono M."/>
            <person name="Ikeo K."/>
            <person name="Iwama A."/>
            <person name="Ishikawa T."/>
            <person name="Jakt M."/>
            <person name="Kanapin A."/>
            <person name="Katoh M."/>
            <person name="Kawasawa Y."/>
            <person name="Kelso J."/>
            <person name="Kitamura H."/>
            <person name="Kitano H."/>
            <person name="Kollias G."/>
            <person name="Krishnan S.P."/>
            <person name="Kruger A."/>
            <person name="Kummerfeld S.K."/>
            <person name="Kurochkin I.V."/>
            <person name="Lareau L.F."/>
            <person name="Lazarevic D."/>
            <person name="Lipovich L."/>
            <person name="Liu J."/>
            <person name="Liuni S."/>
            <person name="McWilliam S."/>
            <person name="Madan Babu M."/>
            <person name="Madera M."/>
            <person name="Marchionni L."/>
            <person name="Matsuda H."/>
            <person name="Matsuzawa S."/>
            <person name="Miki H."/>
            <person name="Mignone F."/>
            <person name="Miyake S."/>
            <person name="Morris K."/>
            <person name="Mottagui-Tabar S."/>
            <person name="Mulder N."/>
            <person name="Nakano N."/>
            <person name="Nakauchi H."/>
            <person name="Ng P."/>
            <person name="Nilsson R."/>
            <person name="Nishiguchi S."/>
            <person name="Nishikawa S."/>
            <person name="Nori F."/>
            <person name="Ohara O."/>
            <person name="Okazaki Y."/>
            <person name="Orlando V."/>
            <person name="Pang K.C."/>
            <person name="Pavan W.J."/>
            <person name="Pavesi G."/>
            <person name="Pesole G."/>
            <person name="Petrovsky N."/>
            <person name="Piazza S."/>
            <person name="Reed J."/>
            <person name="Reid J.F."/>
            <person name="Ring B.Z."/>
            <person name="Ringwald M."/>
            <person name="Rost B."/>
            <person name="Ruan Y."/>
            <person name="Salzberg S.L."/>
            <person name="Sandelin A."/>
            <person name="Schneider C."/>
            <person name="Schoenbach C."/>
            <person name="Sekiguchi K."/>
            <person name="Semple C.A."/>
            <person name="Seno S."/>
            <person name="Sessa L."/>
            <person name="Sheng Y."/>
            <person name="Shibata Y."/>
            <person name="Shimada H."/>
            <person name="Shimada K."/>
            <person name="Silva D."/>
            <person name="Sinclair B."/>
            <person name="Sperling S."/>
            <person name="Stupka E."/>
            <person name="Sugiura K."/>
            <person name="Sultana R."/>
            <person name="Takenaka Y."/>
            <person name="Taki K."/>
            <person name="Tammoja K."/>
            <person name="Tan S.L."/>
            <person name="Tang S."/>
            <person name="Taylor M.S."/>
            <person name="Tegner J."/>
            <person name="Teichmann S.A."/>
            <person name="Ueda H.R."/>
            <person name="van Nimwegen E."/>
            <person name="Verardo R."/>
            <person name="Wei C.L."/>
            <person name="Yagi K."/>
            <person name="Yamanishi H."/>
            <person name="Zabarovsky E."/>
            <person name="Zhu S."/>
            <person name="Zimmer A."/>
            <person name="Hide W."/>
            <person name="Bult C."/>
            <person name="Grimmond S.M."/>
            <person name="Teasdale R.D."/>
            <person name="Liu E.T."/>
            <person name="Brusic V."/>
            <person name="Quackenbush J."/>
            <person name="Wahlestedt C."/>
            <person name="Mattick J.S."/>
            <person name="Hume D.A."/>
            <person name="Kai C."/>
            <person name="Sasaki D."/>
            <person name="Tomaru Y."/>
            <person name="Fukuda S."/>
            <person name="Kanamori-Katayama M."/>
            <person name="Suzuki M."/>
            <person name="Aoki J."/>
            <person name="Arakawa T."/>
            <person name="Iida J."/>
            <person name="Imamura K."/>
            <person name="Itoh M."/>
            <person name="Kato T."/>
            <person name="Kawaji H."/>
            <person name="Kawagashira N."/>
            <person name="Kawashima T."/>
            <person name="Kojima M."/>
            <person name="Kondo S."/>
            <person name="Konno H."/>
            <person name="Nakano K."/>
            <person name="Ninomiya N."/>
            <person name="Nishio T."/>
            <person name="Okada M."/>
            <person name="Plessy C."/>
            <person name="Shibata K."/>
            <person name="Shiraki T."/>
            <person name="Suzuki S."/>
            <person name="Tagami M."/>
            <person name="Waki K."/>
            <person name="Watahiki A."/>
            <person name="Okamura-Oho Y."/>
            <person name="Suzuki H."/>
            <person name="Kawai J."/>
            <person name="Hayashizaki Y."/>
        </authorList>
    </citation>
    <scope>NUCLEOTIDE SEQUENCE [LARGE SCALE MRNA]</scope>
    <source>
        <strain>C57BL/6J</strain>
        <tissue>Testis</tissue>
    </source>
</reference>
<reference key="2">
    <citation type="journal article" date="2004" name="Genome Res.">
        <title>The status, quality, and expansion of the NIH full-length cDNA project: the Mammalian Gene Collection (MGC).</title>
        <authorList>
            <consortium name="The MGC Project Team"/>
        </authorList>
    </citation>
    <scope>NUCLEOTIDE SEQUENCE [LARGE SCALE MRNA]</scope>
</reference>
<reference key="3">
    <citation type="journal article" date="2008" name="Thromb. Haemost.">
        <title>Characterization of calcium- and integrin-binding protein 1 (CIB1) knockout platelets: potential compensation by CIB family members.</title>
        <authorList>
            <person name="Denofrio J.C."/>
            <person name="Yuan W."/>
            <person name="Temple B.R."/>
            <person name="Gentry H.R."/>
            <person name="Parise L.V."/>
        </authorList>
    </citation>
    <scope>TISSUE SPECIFICITY</scope>
</reference>